<sequence>MNMSTNYSTTNQSYKHLSEAERGEIEAYLSVGLKPAEIARRLGRNRSTITREINRGSITQVKKVNGAKGLLPTLLCRCCSITVIRHAREASYYLKLDSVSDDFMRAFTDAMREKPRVHSVDTFVHTYRLQHVDAVVPSTKTLYNYIHQGLLEIKVIDLPRRVRIRKKFTKRPSTKKHLGKSIEERPEEINNRSRFGDWEIDSVLGGKTIGEPSILTLVERQTRYAVTKKLVEKKAEYVNQAVLECMKLYPIKSITADNGNEFSSLSKIEGLDVYFAHAYSSYERGTNENFNGLLREFIPKGCSLKELNQNLLEDYTKAINERPRRIHGYQSAKKLFELTQTA</sequence>
<accession>P37245</accession>
<protein>
    <recommendedName>
        <fullName>Probable transposase for insertion-like sequence element IS1161</fullName>
    </recommendedName>
</protein>
<reference key="1">
    <citation type="journal article" date="1993" name="J. Gen. Microbiol.">
        <title>The ftf gene encoding the cell-bound fructosyltransferase of Streptococcus salivarius ATCC 25975 is preceded by an insertion sequence and followed by FUR1 and clpP homologues.</title>
        <authorList>
            <person name="Giffard P.M."/>
            <person name="Rathsam C."/>
            <person name="Kwan E."/>
            <person name="Kwan D.W.L."/>
            <person name="Bunny K.L."/>
            <person name="Koo S.-P."/>
            <person name="Jacques N.A."/>
        </authorList>
    </citation>
    <scope>NUCLEOTIDE SEQUENCE [GENOMIC DNA]</scope>
    <source>
        <strain>ATCC 25975</strain>
    </source>
</reference>
<feature type="chain" id="PRO_0000211897" description="Probable transposase for insertion-like sequence element IS1161">
    <location>
        <begin position="1"/>
        <end position="342"/>
    </location>
</feature>
<feature type="domain" description="Integrase catalytic" evidence="1">
    <location>
        <begin position="182"/>
        <end position="342"/>
    </location>
</feature>
<dbReference type="EMBL" id="L07794">
    <property type="protein sequence ID" value="AAA26892.1"/>
    <property type="molecule type" value="Genomic_DNA"/>
</dbReference>
<dbReference type="GO" id="GO:0005829">
    <property type="term" value="C:cytosol"/>
    <property type="evidence" value="ECO:0007669"/>
    <property type="project" value="TreeGrafter"/>
</dbReference>
<dbReference type="GO" id="GO:0003677">
    <property type="term" value="F:DNA binding"/>
    <property type="evidence" value="ECO:0007669"/>
    <property type="project" value="UniProtKB-KW"/>
</dbReference>
<dbReference type="GO" id="GO:0004803">
    <property type="term" value="F:transposase activity"/>
    <property type="evidence" value="ECO:0007669"/>
    <property type="project" value="InterPro"/>
</dbReference>
<dbReference type="GO" id="GO:0015074">
    <property type="term" value="P:DNA integration"/>
    <property type="evidence" value="ECO:0007669"/>
    <property type="project" value="InterPro"/>
</dbReference>
<dbReference type="GO" id="GO:0006313">
    <property type="term" value="P:DNA transposition"/>
    <property type="evidence" value="ECO:0007669"/>
    <property type="project" value="InterPro"/>
</dbReference>
<dbReference type="Gene3D" id="1.10.10.60">
    <property type="entry name" value="Homeodomain-like"/>
    <property type="match status" value="1"/>
</dbReference>
<dbReference type="Gene3D" id="3.30.420.10">
    <property type="entry name" value="Ribonuclease H-like superfamily/Ribonuclease H"/>
    <property type="match status" value="1"/>
</dbReference>
<dbReference type="InterPro" id="IPR001584">
    <property type="entry name" value="Integrase_cat-core"/>
</dbReference>
<dbReference type="InterPro" id="IPR025246">
    <property type="entry name" value="IS30-like_HTH"/>
</dbReference>
<dbReference type="InterPro" id="IPR012337">
    <property type="entry name" value="RNaseH-like_sf"/>
</dbReference>
<dbReference type="InterPro" id="IPR036397">
    <property type="entry name" value="RNaseH_sf"/>
</dbReference>
<dbReference type="InterPro" id="IPR051917">
    <property type="entry name" value="Transposase-Integrase"/>
</dbReference>
<dbReference type="InterPro" id="IPR053392">
    <property type="entry name" value="Transposase_IS30-like"/>
</dbReference>
<dbReference type="InterPro" id="IPR001598">
    <property type="entry name" value="Transposase_IS30_CS"/>
</dbReference>
<dbReference type="NCBIfam" id="NF033563">
    <property type="entry name" value="transpos_IS30"/>
    <property type="match status" value="1"/>
</dbReference>
<dbReference type="PANTHER" id="PTHR10948">
    <property type="entry name" value="TRANSPOSASE"/>
    <property type="match status" value="1"/>
</dbReference>
<dbReference type="PANTHER" id="PTHR10948:SF23">
    <property type="entry name" value="TRANSPOSASE INSI FOR INSERTION SEQUENCE ELEMENT IS30A-RELATED"/>
    <property type="match status" value="1"/>
</dbReference>
<dbReference type="Pfam" id="PF13936">
    <property type="entry name" value="HTH_38"/>
    <property type="match status" value="1"/>
</dbReference>
<dbReference type="SUPFAM" id="SSF53098">
    <property type="entry name" value="Ribonuclease H-like"/>
    <property type="match status" value="1"/>
</dbReference>
<dbReference type="PROSITE" id="PS50994">
    <property type="entry name" value="INTEGRASE"/>
    <property type="match status" value="1"/>
</dbReference>
<dbReference type="PROSITE" id="PS01043">
    <property type="entry name" value="TRANSPOSASE_IS30"/>
    <property type="match status" value="1"/>
</dbReference>
<proteinExistence type="inferred from homology"/>
<name>TRA1_STRSL</name>
<evidence type="ECO:0000255" key="1">
    <source>
        <dbReference type="PROSITE-ProRule" id="PRU00457"/>
    </source>
</evidence>
<evidence type="ECO:0000305" key="2"/>
<comment type="function">
    <text evidence="2">Required for the transposition of the insertion element.</text>
</comment>
<comment type="similarity">
    <text evidence="2">Belongs to the transposase IS30 family.</text>
</comment>
<organism>
    <name type="scientific">Streptococcus salivarius</name>
    <dbReference type="NCBI Taxonomy" id="1304"/>
    <lineage>
        <taxon>Bacteria</taxon>
        <taxon>Bacillati</taxon>
        <taxon>Bacillota</taxon>
        <taxon>Bacilli</taxon>
        <taxon>Lactobacillales</taxon>
        <taxon>Streptococcaceae</taxon>
        <taxon>Streptococcus</taxon>
    </lineage>
</organism>
<keyword id="KW-0233">DNA recombination</keyword>
<keyword id="KW-0238">DNA-binding</keyword>
<keyword id="KW-0814">Transposable element</keyword>
<keyword id="KW-0815">Transposition</keyword>